<proteinExistence type="evidence at protein level"/>
<dbReference type="EMBL" id="Y13831">
    <property type="protein sequence ID" value="CAA74156.1"/>
    <property type="molecule type" value="Genomic_DNA"/>
</dbReference>
<dbReference type="EMBL" id="U97504">
    <property type="protein sequence ID" value="AAC04850.1"/>
    <property type="molecule type" value="Genomic_DNA"/>
</dbReference>
<dbReference type="PIR" id="T18448">
    <property type="entry name" value="T18448"/>
</dbReference>
<dbReference type="RefSeq" id="WP_004155375.1">
    <property type="nucleotide sequence ID" value="NZ_RQKG01000002.1"/>
</dbReference>
<dbReference type="OMA" id="TNAERIH"/>
<dbReference type="GO" id="GO:0005576">
    <property type="term" value="C:extracellular region"/>
    <property type="evidence" value="ECO:0007669"/>
    <property type="project" value="UniProtKB-SubCell"/>
</dbReference>
<dbReference type="GO" id="GO:0043657">
    <property type="term" value="C:host cell"/>
    <property type="evidence" value="ECO:0007669"/>
    <property type="project" value="UniProtKB-SubCell"/>
</dbReference>
<dbReference type="InterPro" id="IPR021085">
    <property type="entry name" value="AvrE_T3Es"/>
</dbReference>
<dbReference type="Pfam" id="PF11725">
    <property type="entry name" value="AvrE_T3Es"/>
    <property type="match status" value="1"/>
</dbReference>
<name>DSPE_ERWAM</name>
<keyword id="KW-0964">Secreted</keyword>
<keyword id="KW-0843">Virulence</keyword>
<sequence>MELKSLGTEHKAAVHTAAHNPVGHGVALQQGSSSSSPQNAAASLAAEGKNRGKMPRIHQPSTAADGISAAHQQKKSFSLRGCLGTKKFSRSAPQGQPGTTHSKGATLRDLLARDDGETQHEAAAPDAARLTRSGGVKRRNMDDMAGRPMVKGGSGEDKVPTQQKRHQLNNFGQMRQTMLSKMAHPASANAGDRLQHSPPHIPGSHHEIKEEPVGSTSKATTAHADRVEIAQEDDDSEFQQLHQQRLARERENPPQPPKLGVATPISARFQPKLTAVAESVLEGTDTTQSPLKPQSMLKGSGAGVTPLAVTLDKGKLQLAPDNPPALNTLLKQTLGKDTQHYLAHHASSDGSQHLLLDNKGHLFDIKSTATSYSVLHNSHPGEIKGKLAQAGTGSVSVDGKSGKISLGSGTQSHNKTMLSQPGEAHRSLLTGIWQHPAGAARPQGESIRLHDDKIHILHPELGVWQSADKDTHSQLSRQADGKLYALKDNRTLQNLSDNKSSEKLVDKIKSYSVDQRGQVAILTDTPGRHKMSIMPSLDASPESHISLSLHFADAHQGLLHGKSELEAQSVAISHGRLVVADSEGKLFSAAIPKQGDGNELKMKAMPQHALDEHFGHDHQISGFFHDDHGQLNALVKNNFRQQHACPLGNDHQFHPGWNLTDALVIDNQLGLHHTNPEPHEILDMGHLGSLALQEGKLHYFDQLTKGWTGAESDCKQLKKGLDGAAYLLKDGEVKRLNINQSTSSIKHGTENVFSLPHVRNKPEPGDALQGLNKDDKAQAMAVIGVNKYLALTEKGDIRSFQIKPGTQQLERPAQTLSREGISGELKDIHVDHKQNLYALTHEGEVFHQPREAWQNGAESSSWHKLALPQSESKLKSLDMSHEHKPIATFEDGSQHQLKAGGWHAYAAPERGPLAVGTSGSQTVFNRLMQGVKGKVIPGSGLTVKLSAQTGGMTGAEGRKVSSKFSERIRAYAFNPTMSTPRPIKNAAYATQHGWQGREGLKPLYEMQGALIKQLDAHNVRHNAPQPDLQSKLETLDLGEHGAELLNDMKRFRDELEQSATRSVTVLGQHQGVLKSNGEINSEFKPSPGKALVQSFNVNRSGQDLSKSLQQAVHATPPSAESKLQSMLGHFVSAGVDMSHQKGEIPLGRQRDPNDKTALTKSRLILDTVTIGELHELADKAKLVSDHKPDADQIKQLRQQFDTLREKRYESNPVKHYTDMGFTHNKALEANYDAVKAFINAFKKEHHGVNLTTRTVLESQGSAELAKKLKNTLLSLDSGESMSFSRSYGGGVSTVFVPTLSKKVPVPVIPGAGITLDRAYNLSFSRTSGGLNVSFGRDGGVSGNIMVATGHDVMPYMTGKKTSAGNASDWLSAKHKISPDLRIGAAVSGTLQGTLQNSLKFKLTEDELPGFIHGLTHGTLTPAELLQKGIEHQMKQGSKLTFSVDTSANLDLRAGINLNEDGSKPNGVTARVSAGLSASANLAAGSRERSTTSGQFGSTTSASNNRPTFLNGVGAGANLTAALGVAHSSTHEGKPVGIFPAFTSTNVSAALALDNRTSQSISLELKRAEPVTSNDISELTSTLGKHFKDSATTKMLAALKELDDAKPAEQLHILQQHFSAKDVVGDERYEAVRNLKKLVIRQQAADSHSMELGSASHSTTYNNLSRINNDGIVELLHKHFDAALPASSAKRLGEMMNNDPALKDIIKQLQSTPFSSASVSMELKDGLREQTEKAILDGKVGREEVGVLFQDRNNLRVKSVSVSQSVSKSEGFNTPALLLGTSNSAAMSMERNIGTINFKYGQDQNTPRRFTLEGGIAQANPQVASALTDLKKEGLEMKS</sequence>
<gene>
    <name evidence="17" type="primary">dspE</name>
    <name evidence="16" type="synonym">dspA</name>
</gene>
<reference key="1">
    <citation type="journal article" date="1997" name="Mol. Microbiol.">
        <title>DspA, an essential pathogenicity factor of Erwinia amylovora showing homology with AvrE of Pseudomonas syringae, is secreted via the Hrp secretion pathway in a DspB-dependent way.</title>
        <authorList>
            <person name="Gaudriault S."/>
            <person name="Malandrin L."/>
            <person name="Paulin J.P."/>
            <person name="Barny M.A."/>
        </authorList>
    </citation>
    <scope>NUCLEOTIDE SEQUENCE [GENOMIC DNA]</scope>
    <scope>FUNCTION IN VIRULENCE</scope>
    <scope>SUBCELLULAR LOCATION</scope>
    <scope>INDUCTION</scope>
    <scope>DISRUPTION PHENOTYPE</scope>
    <source>
        <strain>CFBP1430</strain>
    </source>
</reference>
<reference key="2">
    <citation type="journal article" date="1998" name="Proc. Natl. Acad. Sci. U.S.A.">
        <title>Homology and functional similarity of an hrp-linked pathogenicity locus, dspEF, of Erwinia amylovora and the avirulence locus avrE of Pseudomonas syringae pathovar tomato.</title>
        <authorList>
            <person name="Bogdanove A.J."/>
            <person name="Kim J.F."/>
            <person name="Wei Z."/>
            <person name="Kolchinsky P."/>
            <person name="Charkowski A.O."/>
            <person name="Conlin A.K."/>
            <person name="Collmer A."/>
            <person name="Beer S.V."/>
        </authorList>
    </citation>
    <scope>NUCLEOTIDE SEQUENCE [GENOMIC DNA]</scope>
    <scope>FUNCTION IN VIRULENCE</scope>
    <scope>INDUCTION</scope>
    <scope>DISRUPTION PHENOTYPE</scope>
    <source>
        <strain>Ea273</strain>
        <strain>Ea321</strain>
    </source>
</reference>
<reference key="3">
    <citation type="journal article" date="1998" name="J. Bacteriol.">
        <title>Erwinia amylovora secretes DspE, a pathogenicity factor and functional AvrE homolog, through the Hrp (type III secretion) pathway.</title>
        <authorList>
            <person name="Bogdanove A.J."/>
            <person name="Bauer D.W."/>
            <person name="Beer S.V."/>
        </authorList>
    </citation>
    <scope>SUBCELLULAR LOCATION</scope>
    <source>
        <strain>Ea273</strain>
    </source>
</reference>
<reference key="4">
    <citation type="journal article" date="2006" name="Mol. Plant Microbe Interact.">
        <title>DspA/E, a type III effector essential for Erwinia amylovora pathogenicity and growth in planta, induces cell death in host apple and nonhost tobacco plants.</title>
        <authorList>
            <person name="Boureau T."/>
            <person name="ElMaarouf-Bouteau H."/>
            <person name="Garnier A."/>
            <person name="Brisset M.N."/>
            <person name="Perino C."/>
            <person name="Pucheu I."/>
            <person name="Barny M.A."/>
        </authorList>
    </citation>
    <scope>FUNCTION</scope>
    <scope>DISRUPTION PHENOTYPE</scope>
    <source>
        <strain>CFBP1430</strain>
    </source>
</reference>
<reference key="5">
    <citation type="journal article" date="2007" name="Mol. Plant Pathol.">
        <title>DspA/E, a type III effector of Erwinia amylovora, is required for early rapid growth in Nicotiana benthamiana and causes NbSGT1-dependent cell death.</title>
        <authorList>
            <person name="Oh C.S."/>
            <person name="Martin G.B."/>
            <person name="Beer S.V."/>
        </authorList>
    </citation>
    <scope>FUNCTION</scope>
    <source>
        <strain>Ea273</strain>
    </source>
</reference>
<reference key="6">
    <citation type="journal article" date="2008" name="Mol. Plant Microbe Interact.">
        <title>Erwinia amylovora type three-secreted proteins trigger cell death and defense responses in Arabidopsis thaliana.</title>
        <authorList>
            <person name="Degrave A."/>
            <person name="Fagard M."/>
            <person name="Perino C."/>
            <person name="Brisset M.N."/>
            <person name="Gaubert S."/>
            <person name="Laroche S."/>
            <person name="Patrit O."/>
            <person name="Barny M.A."/>
        </authorList>
    </citation>
    <scope>FUNCTION</scope>
    <scope>DISRUPTION PHENOTYPE</scope>
    <source>
        <strain>CFBP1430</strain>
    </source>
</reference>
<reference key="7">
    <citation type="journal article" date="2008" name="Mol. Plant Pathol.">
        <title>HrpN of Erwinia amylovora functions in the translocation of DspA/E into plant cells.</title>
        <authorList>
            <person name="Bocsanczy A.M."/>
            <person name="Nissinen R.M."/>
            <person name="Oh C.S."/>
            <person name="Beer S.V."/>
        </authorList>
    </citation>
    <scope>SUBCELLULAR LOCATION</scope>
    <source>
        <strain>Ea321</strain>
    </source>
</reference>
<reference key="8">
    <citation type="journal article" date="2009" name="Mol. Plant Microbe Interact.">
        <title>Functional analysis of the N terminus of the Erwinia amylovora secreted effector DspA/E reveals features required for secretion, translocation, and binding to the chaperone DspB/F.</title>
        <authorList>
            <person name="Triplett L.R."/>
            <person name="Melotto M."/>
            <person name="Sundin G.W."/>
        </authorList>
    </citation>
    <scope>FUNCTION IN VIRULENCE</scope>
    <scope>FUNCTIONAL ANALYSIS OF THE N-TERMINUS</scope>
    <scope>INTERACTION WITH DSPF</scope>
    <scope>SUBCELLULAR LOCATION</scope>
    <scope>DOMAIN</scope>
    <source>
        <strain>Ea1189</strain>
    </source>
</reference>
<reference key="9">
    <citation type="journal article" date="2010" name="Microbiology">
        <title>Secretion and translocation signals and DspB/F-binding domains in the type III effector DspA/E of Erwinia amylovora.</title>
        <authorList>
            <person name="Oh C.S."/>
            <person name="Carpenter S.C.D."/>
            <person name="Hayes M.L."/>
            <person name="Beer S.V."/>
        </authorList>
    </citation>
    <scope>INTERACTION WITH DSPF</scope>
    <scope>SUBCELLULAR LOCATION</scope>
    <scope>DOMAIN</scope>
</reference>
<reference key="10">
    <citation type="journal article" date="2013" name="FEMS Microbiol. Lett.">
        <title>Mutational analysis of a predicted double beta-propeller domain of the DspA/E effector of Erwinia amylovora.</title>
        <authorList>
            <person name="Siamer S."/>
            <person name="Gaubert S."/>
            <person name="Boureau T."/>
            <person name="Brisset M.N."/>
            <person name="Barny M.A."/>
        </authorList>
    </citation>
    <scope>MUTAGENESIS OF GLU-47; LYS-384; LEU-428; TYR-484; LYS-487; GLU-502; ASP-626; GLN-693 AND LYS-715</scope>
    <source>
        <strain>CFBP1430</strain>
    </source>
</reference>
<reference key="11">
    <citation type="journal article" date="2013" name="Mol. Plant Pathol.">
        <title>The bacterial effector DspA/E is toxic in Arabidopsis thaliana and is required for multiplication and survival of fire blight pathogen.</title>
        <authorList>
            <person name="Degrave A."/>
            <person name="Moreau M."/>
            <person name="Launay A."/>
            <person name="Barny M.A."/>
            <person name="Brisset M.N."/>
            <person name="Patrit O."/>
            <person name="Taconnat L."/>
            <person name="Vedel R."/>
            <person name="Fagard M."/>
        </authorList>
    </citation>
    <scope>FUNCTION</scope>
    <scope>DISRUPTION PHENOTYPE</scope>
    <source>
        <strain>CFBP1430</strain>
    </source>
</reference>
<reference key="12">
    <citation type="journal article" date="2023" name="Nature">
        <title>Bacterial pathogens deliver water- and solute-permeable channels to plant cells.</title>
        <authorList>
            <person name="Nomura K."/>
            <person name="Andreazza F."/>
            <person name="Cheng J."/>
            <person name="Dong K."/>
            <person name="Zhou P."/>
            <person name="He S.Y."/>
        </authorList>
    </citation>
    <scope>FUNCTION AS A CHANNEL</scope>
    <scope>ACTIVITY REGULATION</scope>
    <scope>DOMAIN</scope>
    <scope>MUTAGENESIS OF 1399-LYS--LYS-1401 AND 1776-LEU--LEU-1778</scope>
    <source>
        <strain>Ea27</strain>
    </source>
</reference>
<evidence type="ECO:0000256" key="1">
    <source>
        <dbReference type="SAM" id="MobiDB-lite"/>
    </source>
</evidence>
<evidence type="ECO:0000269" key="2">
    <source>
    </source>
</evidence>
<evidence type="ECO:0000269" key="3">
    <source>
    </source>
</evidence>
<evidence type="ECO:0000269" key="4">
    <source>
    </source>
</evidence>
<evidence type="ECO:0000269" key="5">
    <source>
    </source>
</evidence>
<evidence type="ECO:0000269" key="6">
    <source>
    </source>
</evidence>
<evidence type="ECO:0000269" key="7">
    <source>
    </source>
</evidence>
<evidence type="ECO:0000269" key="8">
    <source>
    </source>
</evidence>
<evidence type="ECO:0000269" key="9">
    <source>
    </source>
</evidence>
<evidence type="ECO:0000269" key="10">
    <source>
    </source>
</evidence>
<evidence type="ECO:0000269" key="11">
    <source>
    </source>
</evidence>
<evidence type="ECO:0000269" key="12">
    <source>
    </source>
</evidence>
<evidence type="ECO:0000269" key="13">
    <source>
    </source>
</evidence>
<evidence type="ECO:0000303" key="14">
    <source>
    </source>
</evidence>
<evidence type="ECO:0000303" key="15">
    <source>
    </source>
</evidence>
<evidence type="ECO:0000303" key="16">
    <source>
    </source>
</evidence>
<evidence type="ECO:0000303" key="17">
    <source>
    </source>
</evidence>
<evidence type="ECO:0000303" key="18">
    <source>
    </source>
</evidence>
<evidence type="ECO:0000305" key="19"/>
<accession>O54581</accession>
<organism>
    <name type="scientific">Erwinia amylovora</name>
    <name type="common">Fire blight bacteria</name>
    <dbReference type="NCBI Taxonomy" id="552"/>
    <lineage>
        <taxon>Bacteria</taxon>
        <taxon>Pseudomonadati</taxon>
        <taxon>Pseudomonadota</taxon>
        <taxon>Gammaproteobacteria</taxon>
        <taxon>Enterobacterales</taxon>
        <taxon>Erwiniaceae</taxon>
        <taxon>Erwinia</taxon>
    </lineage>
</organism>
<feature type="chain" id="PRO_0000459497" description="Type III effector DspE">
    <location>
        <begin position="1"/>
        <end position="1838"/>
    </location>
</feature>
<feature type="region of interest" description="Disordered" evidence="1">
    <location>
        <begin position="1"/>
        <end position="72"/>
    </location>
</feature>
<feature type="region of interest" description="Disordered" evidence="1">
    <location>
        <begin position="86"/>
        <end position="163"/>
    </location>
</feature>
<feature type="region of interest" description="Disordered" evidence="1">
    <location>
        <begin position="182"/>
        <end position="264"/>
    </location>
</feature>
<feature type="region of interest" description="Disordered" evidence="1">
    <location>
        <begin position="281"/>
        <end position="300"/>
    </location>
</feature>
<feature type="region of interest" description="Disordered" evidence="1">
    <location>
        <begin position="398"/>
        <end position="418"/>
    </location>
</feature>
<feature type="region of interest" description="Disordered" evidence="1">
    <location>
        <begin position="1480"/>
        <end position="1505"/>
    </location>
</feature>
<feature type="compositionally biased region" description="Basic and acidic residues" evidence="1">
    <location>
        <begin position="1"/>
        <end position="12"/>
    </location>
</feature>
<feature type="compositionally biased region" description="Low complexity" evidence="1">
    <location>
        <begin position="27"/>
        <end position="46"/>
    </location>
</feature>
<feature type="compositionally biased region" description="Polar residues" evidence="1">
    <location>
        <begin position="91"/>
        <end position="103"/>
    </location>
</feature>
<feature type="compositionally biased region" description="Basic and acidic residues" evidence="1">
    <location>
        <begin position="110"/>
        <end position="120"/>
    </location>
</feature>
<feature type="compositionally biased region" description="Polar residues" evidence="1">
    <location>
        <begin position="407"/>
        <end position="418"/>
    </location>
</feature>
<feature type="compositionally biased region" description="Low complexity" evidence="1">
    <location>
        <begin position="1480"/>
        <end position="1502"/>
    </location>
</feature>
<feature type="mutagenesis site" description="Impairs function." evidence="8">
    <original>E</original>
    <variation>EGVPPE</variation>
    <location>
        <position position="47"/>
    </location>
</feature>
<feature type="mutagenesis site" description="Loss of activity, cannot complement the deletion mutant for pathogenicity." evidence="8">
    <original>K</original>
    <variation>KGVPLK</variation>
    <location>
        <position position="384"/>
    </location>
</feature>
<feature type="mutagenesis site" description="Loss of activity, cannot complement the deletion mutant for pathogenicity." evidence="8">
    <original>L</original>
    <variation>LLGPYL</variation>
    <location>
        <position position="428"/>
    </location>
</feature>
<feature type="mutagenesis site" description="Impairs function." evidence="8">
    <original>Y</original>
    <variation>YAGYPY</variation>
    <location>
        <position position="484"/>
    </location>
</feature>
<feature type="mutagenesis site" description="Stabilizes the protein. The protein is secreted very abundantly and can complement the non-pathogenic phenotype of the deletion mutant." evidence="8">
    <original>K</original>
    <variation>KGVPLK</variation>
    <location>
        <position position="487"/>
    </location>
</feature>
<feature type="mutagenesis site" description="Impairs function." evidence="8">
    <original>E</original>
    <variation>ERGTPE</variation>
    <location>
        <position position="502"/>
    </location>
</feature>
<feature type="mutagenesis site" description="Impairs function." evidence="8">
    <original>D</original>
    <variation>DGVPHD</variation>
    <location>
        <position position="626"/>
    </location>
</feature>
<feature type="mutagenesis site" description="Stabilizes the protein. The protein is secreted very abundantly and can complement the non-pathogenic phenotype of the deletion mutant." evidence="8">
    <original>Q</original>
    <variation>QEGYPQ</variation>
    <location>
        <position position="693"/>
    </location>
</feature>
<feature type="mutagenesis site" description="Impairs function." evidence="8">
    <original>K</original>
    <variation>KQGYPK</variation>
    <location>
        <position position="715"/>
    </location>
</feature>
<feature type="mutagenesis site" description="Partially abolishes activity." evidence="10">
    <original>KFK</original>
    <variation>EFE</variation>
    <location>
        <begin position="1399"/>
        <end position="1401"/>
    </location>
</feature>
<feature type="mutagenesis site" description="Abolishes activity. Probably cannot anchor the protein across the membrane." evidence="10">
    <original>LLL</original>
    <variation>EEE</variation>
    <location>
        <begin position="1776"/>
        <end position="1778"/>
    </location>
</feature>
<comment type="function">
    <text evidence="10">Major virulence factor that may function as a water- and solute-permeable channel dedicated to creating osmotic/water potential perturbation and a water- and nutrient-rich apoplast in which bacteria multiply within the infected plant tissues (PubMed:37704725). Expression in Xenopus oocytes results in inward and outward currents, permeability to water and osmolarity-dependent oocyte swelling and bursting (PubMed:37704725).</text>
</comment>
<comment type="function">
    <text evidence="2 3 5 7 9 11 12">Acts as a major cell-death inducer during fire blight, a necrotic disease affecting plants of the rosaceous family, and during hypersensitive response (HR) on non-host plants (PubMed:16404949). Essential for pathogenicity on host plants (PubMed:16404949, PubMed:19737101, PubMed:9426142, PubMed:9448330). Contributes quantitatively and in a strain-dependent fashion to HR elicitation in non-host plants such as tobacco (PubMed:9448330). Induces cell death in leaves of apple, a host plant, and tobacco, a non-host plant (PubMed:16404949). Also triggers necrosis in the widely used model, non-host, N.benthamiana and in yeast (PubMed:20507497). Required for the transient multiplication and survival of E.amylovora in non-host A.thaliana leaves (PubMed:23634775). In A.thaliana, triggers electrolyte leakage, activation of defense pathways, reactive oxygen species (ROS) accumulation and cell death (PubMed:18616404, PubMed:23634775). The toxicity of DspE in A.thaliana is associated with an early repression of de novo protein synthesis (PubMed:23634775).</text>
</comment>
<comment type="activity regulation">
    <text evidence="10">Polyamidoamine dendrimers inhibit channel and virulence activities.</text>
</comment>
<comment type="subunit">
    <text evidence="5 6">Interacts with the chaperone DspF (DspB/F).</text>
</comment>
<comment type="subcellular location">
    <subcellularLocation>
        <location evidence="4 5 6 11 13">Secreted</location>
    </subcellularLocation>
    <subcellularLocation>
        <location evidence="4 5 6">Host cell</location>
    </subcellularLocation>
    <text evidence="4 5 6 11 13">Secreted via the Hrp type III secretion system (T3SS) (PubMed:18705858, PubMed:19737101, PubMed:20110301, PubMed:9426142, PubMed:9555912). Translocated into the plant cells (PubMed:18705858, PubMed:19737101, PubMed:20110301). Gaudriault et al. observed that the chaperone DspF is required for secretion, but a more recent study by Oh et al. showed that short lengths of the N-terminal portion of DspE could be secreted in the absence of DspF (PubMed:20110301, PubMed:9426142). Translocation of DspE into plant cells is strongly enhanced in the presence of DspF (PubMed:20110301). HrpJ and HrpN are required for efficient translocation, but not for expression and secretion of DspE (PubMed:18705858).</text>
</comment>
<comment type="induction">
    <text evidence="11 12">Transcription of the dsp region is positively regulated by the alternative sigma factor HrpL.</text>
</comment>
<comment type="domain">
    <text evidence="5 6">Secretion and translocation signals are located in the N-terminal region (PubMed:19737101, PubMed:20110301). The N-terminal region is required for interaction with the chaperone DspF (PubMed:19737101, PubMed:20110301). There are probably one or more DspF-binding motifs or domains near the C-terminus of DspE (PubMed:20110301).</text>
</comment>
<comment type="domain">
    <text evidence="10">Folds into a beta-barrel structure that resembles bacterial porins.</text>
</comment>
<comment type="disruption phenotype">
    <text evidence="2 3 9 11 12">Disruption mutant cannot cause fire blight (PubMed:9426142, PubMed:9448330). Mutant is severely impaired in its ability to induce electrolyte leakage in apple and tobacco leaves (PubMed:16404949). Transposon insertion reduces the ability of strain Ea321, but not of strain Ea273, to elicit the hypersensitive response (HR) in tobacco (PubMed:9448330). Mutant induces fewer necrotic symptoms on A.thaliana leaves than wild-type strain (PubMed:18616404). It is unable to multiply in A.thaliana leaves and bacterial numbers decrease rapidly after inoculation (PubMed:23634775).</text>
</comment>
<comment type="miscellaneous">
    <text evidence="12">The P.syringae pv. tomato avrE locus in trans restores pathogenicity to dspE mutants, although restored strains are low in virulence.</text>
</comment>
<comment type="similarity">
    <text evidence="19">Belongs to the AvrE family.</text>
</comment>
<protein>
    <recommendedName>
        <fullName evidence="19">Type III effector DspE</fullName>
    </recommendedName>
    <alternativeName>
        <fullName evidence="15">DspA/E effector</fullName>
    </alternativeName>
    <alternativeName>
        <fullName evidence="18">Pathogenicity factor DspE</fullName>
    </alternativeName>
    <alternativeName>
        <fullName evidence="14">Secreted effector DspA/E</fullName>
    </alternativeName>
</protein>